<proteinExistence type="inferred from homology"/>
<name>RSD_ECOL6</name>
<sequence>MLNQLDNLTERVRGSNKLVDRWLHVRKHLLVAYYNLVGIKPGKESYMRLNEKALDDFCQSLVDYLSAGHFSIYERILHKLEGNGQLARAAKIWPQLEANTQQIMDDYDSSLETAIDHDNYLEFQQVLSDIGEALEARFVLEDKLILLVLDAARVKHPA</sequence>
<accession>Q8FB76</accession>
<dbReference type="EMBL" id="AE014075">
    <property type="protein sequence ID" value="AAN83380.1"/>
    <property type="molecule type" value="Genomic_DNA"/>
</dbReference>
<dbReference type="RefSeq" id="WP_000934299.1">
    <property type="nucleotide sequence ID" value="NZ_CP051263.1"/>
</dbReference>
<dbReference type="SMR" id="Q8FB76"/>
<dbReference type="STRING" id="199310.c4952"/>
<dbReference type="KEGG" id="ecc:c4952"/>
<dbReference type="eggNOG" id="COG3160">
    <property type="taxonomic scope" value="Bacteria"/>
</dbReference>
<dbReference type="HOGENOM" id="CLU_142729_0_0_6"/>
<dbReference type="BioCyc" id="ECOL199310:C4952-MONOMER"/>
<dbReference type="Proteomes" id="UP000001410">
    <property type="component" value="Chromosome"/>
</dbReference>
<dbReference type="GO" id="GO:0005737">
    <property type="term" value="C:cytoplasm"/>
    <property type="evidence" value="ECO:0007669"/>
    <property type="project" value="UniProtKB-SubCell"/>
</dbReference>
<dbReference type="GO" id="GO:0006355">
    <property type="term" value="P:regulation of DNA-templated transcription"/>
    <property type="evidence" value="ECO:0007669"/>
    <property type="project" value="InterPro"/>
</dbReference>
<dbReference type="FunFam" id="1.20.120.1370:FF:000001">
    <property type="entry name" value="Regulator of sigma D"/>
    <property type="match status" value="1"/>
</dbReference>
<dbReference type="Gene3D" id="1.20.120.1370">
    <property type="entry name" value="Regulator of RNA polymerase sigma(70) subunit, domain 4"/>
    <property type="match status" value="1"/>
</dbReference>
<dbReference type="HAMAP" id="MF_01181">
    <property type="entry name" value="Rsd"/>
    <property type="match status" value="1"/>
</dbReference>
<dbReference type="InterPro" id="IPR038309">
    <property type="entry name" value="Rsd/AlgQ_sf"/>
</dbReference>
<dbReference type="InterPro" id="IPR023785">
    <property type="entry name" value="Sigma70_reg_Rsd"/>
</dbReference>
<dbReference type="InterPro" id="IPR007448">
    <property type="entry name" value="Sigma70_reg_Rsd_AlgQ"/>
</dbReference>
<dbReference type="NCBIfam" id="NF008723">
    <property type="entry name" value="PRK11718.1"/>
    <property type="match status" value="1"/>
</dbReference>
<dbReference type="Pfam" id="PF04353">
    <property type="entry name" value="Rsd_AlgQ"/>
    <property type="match status" value="1"/>
</dbReference>
<dbReference type="PIRSF" id="PIRSF016548">
    <property type="entry name" value="Rsd_AlgQ"/>
    <property type="match status" value="1"/>
</dbReference>
<organism>
    <name type="scientific">Escherichia coli O6:H1 (strain CFT073 / ATCC 700928 / UPEC)</name>
    <dbReference type="NCBI Taxonomy" id="199310"/>
    <lineage>
        <taxon>Bacteria</taxon>
        <taxon>Pseudomonadati</taxon>
        <taxon>Pseudomonadota</taxon>
        <taxon>Gammaproteobacteria</taxon>
        <taxon>Enterobacterales</taxon>
        <taxon>Enterobacteriaceae</taxon>
        <taxon>Escherichia</taxon>
    </lineage>
</organism>
<feature type="chain" id="PRO_0000268882" description="Regulator of sigma D">
    <location>
        <begin position="1"/>
        <end position="158"/>
    </location>
</feature>
<evidence type="ECO:0000255" key="1">
    <source>
        <dbReference type="HAMAP-Rule" id="MF_01181"/>
    </source>
</evidence>
<gene>
    <name evidence="1" type="primary">rsd</name>
    <name type="ordered locus">c4952</name>
</gene>
<comment type="function">
    <text evidence="1">Binds RpoD and negatively regulates RpoD-mediated transcription activation by preventing the interaction between the primary sigma factor RpoD with the catalytic core of the RNA polymerase and with promoter DNA. May be involved in replacement of the RNA polymerase sigma subunit from RpoD to RpoS during the transition from exponential growth to the stationary phase.</text>
</comment>
<comment type="subunit">
    <text evidence="1">Interacts with RpoD.</text>
</comment>
<comment type="subcellular location">
    <subcellularLocation>
        <location evidence="1">Cytoplasm</location>
    </subcellularLocation>
</comment>
<comment type="similarity">
    <text evidence="1">Belongs to the Rsd/AlgQ family.</text>
</comment>
<reference key="1">
    <citation type="journal article" date="2002" name="Proc. Natl. Acad. Sci. U.S.A.">
        <title>Extensive mosaic structure revealed by the complete genome sequence of uropathogenic Escherichia coli.</title>
        <authorList>
            <person name="Welch R.A."/>
            <person name="Burland V."/>
            <person name="Plunkett G. III"/>
            <person name="Redford P."/>
            <person name="Roesch P."/>
            <person name="Rasko D."/>
            <person name="Buckles E.L."/>
            <person name="Liou S.-R."/>
            <person name="Boutin A."/>
            <person name="Hackett J."/>
            <person name="Stroud D."/>
            <person name="Mayhew G.F."/>
            <person name="Rose D.J."/>
            <person name="Zhou S."/>
            <person name="Schwartz D.C."/>
            <person name="Perna N.T."/>
            <person name="Mobley H.L.T."/>
            <person name="Donnenberg M.S."/>
            <person name="Blattner F.R."/>
        </authorList>
    </citation>
    <scope>NUCLEOTIDE SEQUENCE [LARGE SCALE GENOMIC DNA]</scope>
    <source>
        <strain>CFT073 / ATCC 700928 / UPEC</strain>
    </source>
</reference>
<keyword id="KW-0963">Cytoplasm</keyword>
<keyword id="KW-1185">Reference proteome</keyword>
<keyword id="KW-0804">Transcription</keyword>
<keyword id="KW-0805">Transcription regulation</keyword>
<protein>
    <recommendedName>
        <fullName evidence="1">Regulator of sigma D</fullName>
    </recommendedName>
</protein>